<sequence>MSLVSMKEMLNEALRGKYAVGQFNINNLEWTQAILAAAEEEKSPVILGVSEGAARYMGGFKTVVNMVKGLMEDMNITVPVAIHLDHGSSFEKCKAAIDAGFTSVMIDASHHPFEENVRITSQVVEYAHARGVSVEAELGIVGGQEDDVVGEGVIYADPKECEELVKRTGIDCLAPALGSVHGPYKGEPKLGFAEMEKIRDLTGIPLVLHGGTGIPTEQIQRAISLGTSKINVNTENQIAFTKAVRELLAKDPNVYDPRKIIGPGRDAIKATVIGKMREFGSSGKAAQ</sequence>
<proteinExistence type="inferred from homology"/>
<keyword id="KW-0324">Glycolysis</keyword>
<keyword id="KW-0456">Lyase</keyword>
<keyword id="KW-0479">Metal-binding</keyword>
<keyword id="KW-0597">Phosphoprotein</keyword>
<keyword id="KW-0862">Zinc</keyword>
<accession>P94453</accession>
<reference key="1">
    <citation type="submission" date="1998-02" db="EMBL/GenBank/DDBJ databases">
        <authorList>
            <person name="Desai S.Y."/>
            <person name="Littlechild J.A."/>
        </authorList>
    </citation>
    <scope>NUCLEOTIDE SEQUENCE [GENOMIC DNA]</scope>
</reference>
<feature type="chain" id="PRO_0000178704" description="Fructose-bisphosphate aldolase">
    <location>
        <begin position="1"/>
        <end position="287"/>
    </location>
</feature>
<feature type="active site" description="Proton donor" evidence="1">
    <location>
        <position position="85"/>
    </location>
</feature>
<feature type="binding site" evidence="1">
    <location>
        <position position="50"/>
    </location>
    <ligand>
        <name>D-glyceraldehyde 3-phosphate</name>
        <dbReference type="ChEBI" id="CHEBI:59776"/>
    </ligand>
</feature>
<feature type="binding site" evidence="1">
    <location>
        <position position="86"/>
    </location>
    <ligand>
        <name>Zn(2+)</name>
        <dbReference type="ChEBI" id="CHEBI:29105"/>
        <label>1</label>
        <note>catalytic</note>
    </ligand>
</feature>
<feature type="binding site" evidence="1">
    <location>
        <position position="107"/>
    </location>
    <ligand>
        <name>Zn(2+)</name>
        <dbReference type="ChEBI" id="CHEBI:29105"/>
        <label>2</label>
    </ligand>
</feature>
<feature type="binding site" evidence="1">
    <location>
        <position position="137"/>
    </location>
    <ligand>
        <name>Zn(2+)</name>
        <dbReference type="ChEBI" id="CHEBI:29105"/>
        <label>2</label>
    </ligand>
</feature>
<feature type="binding site" evidence="1">
    <location>
        <position position="181"/>
    </location>
    <ligand>
        <name>Zn(2+)</name>
        <dbReference type="ChEBI" id="CHEBI:29105"/>
        <label>1</label>
        <note>catalytic</note>
    </ligand>
</feature>
<feature type="binding site" evidence="1">
    <location>
        <position position="182"/>
    </location>
    <ligand>
        <name>dihydroxyacetone phosphate</name>
        <dbReference type="ChEBI" id="CHEBI:57642"/>
    </ligand>
</feature>
<feature type="binding site" evidence="1">
    <location>
        <position position="209"/>
    </location>
    <ligand>
        <name>Zn(2+)</name>
        <dbReference type="ChEBI" id="CHEBI:29105"/>
        <label>1</label>
        <note>catalytic</note>
    </ligand>
</feature>
<feature type="binding site" evidence="1">
    <location>
        <begin position="210"/>
        <end position="212"/>
    </location>
    <ligand>
        <name>dihydroxyacetone phosphate</name>
        <dbReference type="ChEBI" id="CHEBI:57642"/>
    </ligand>
</feature>
<feature type="binding site" evidence="1">
    <location>
        <begin position="231"/>
        <end position="234"/>
    </location>
    <ligand>
        <name>dihydroxyacetone phosphate</name>
        <dbReference type="ChEBI" id="CHEBI:57642"/>
    </ligand>
</feature>
<feature type="modified residue" description="Phosphothreonine" evidence="1">
    <location>
        <position position="212"/>
    </location>
</feature>
<feature type="modified residue" description="Phosphothreonine" evidence="1">
    <location>
        <position position="234"/>
    </location>
</feature>
<comment type="function">
    <text evidence="1">Catalyzes the aldol condensation of dihydroxyacetone phosphate (DHAP or glycerone-phosphate) with glyceraldehyde 3-phosphate (G3P) to form fructose 1,6-bisphosphate (FBP) in gluconeogenesis and the reverse reaction in glycolysis.</text>
</comment>
<comment type="catalytic activity">
    <reaction>
        <text>beta-D-fructose 1,6-bisphosphate = D-glyceraldehyde 3-phosphate + dihydroxyacetone phosphate</text>
        <dbReference type="Rhea" id="RHEA:14729"/>
        <dbReference type="ChEBI" id="CHEBI:32966"/>
        <dbReference type="ChEBI" id="CHEBI:57642"/>
        <dbReference type="ChEBI" id="CHEBI:59776"/>
        <dbReference type="EC" id="4.1.2.13"/>
    </reaction>
</comment>
<comment type="cofactor">
    <cofactor evidence="1">
        <name>Zn(2+)</name>
        <dbReference type="ChEBI" id="CHEBI:29105"/>
    </cofactor>
    <text evidence="1">Binds 2 Zn(2+) ions per subunit. One is catalytic and the other provides a structural contribution.</text>
</comment>
<comment type="pathway">
    <text>Carbohydrate degradation; glycolysis; D-glyceraldehyde 3-phosphate and glycerone phosphate from D-glucose: step 4/4.</text>
</comment>
<comment type="similarity">
    <text evidence="2">Belongs to the class II fructose-bisphosphate aldolase family.</text>
</comment>
<dbReference type="EC" id="4.1.2.13"/>
<dbReference type="EMBL" id="Y11135">
    <property type="protein sequence ID" value="CAA72018.1"/>
    <property type="molecule type" value="Genomic_DNA"/>
</dbReference>
<dbReference type="RefSeq" id="WP_033017336.1">
    <property type="nucleotide sequence ID" value="NZ_JARTKY010000106.1"/>
</dbReference>
<dbReference type="SMR" id="P94453"/>
<dbReference type="UniPathway" id="UPA00109">
    <property type="reaction ID" value="UER00183"/>
</dbReference>
<dbReference type="GO" id="GO:0004332">
    <property type="term" value="F:fructose-bisphosphate aldolase activity"/>
    <property type="evidence" value="ECO:0007669"/>
    <property type="project" value="UniProtKB-EC"/>
</dbReference>
<dbReference type="GO" id="GO:0008270">
    <property type="term" value="F:zinc ion binding"/>
    <property type="evidence" value="ECO:0007669"/>
    <property type="project" value="InterPro"/>
</dbReference>
<dbReference type="GO" id="GO:0030388">
    <property type="term" value="P:fructose 1,6-bisphosphate metabolic process"/>
    <property type="evidence" value="ECO:0007669"/>
    <property type="project" value="InterPro"/>
</dbReference>
<dbReference type="GO" id="GO:0006096">
    <property type="term" value="P:glycolytic process"/>
    <property type="evidence" value="ECO:0007669"/>
    <property type="project" value="UniProtKB-UniPathway"/>
</dbReference>
<dbReference type="CDD" id="cd00947">
    <property type="entry name" value="TBP_aldolase_IIB"/>
    <property type="match status" value="1"/>
</dbReference>
<dbReference type="Gene3D" id="3.20.20.70">
    <property type="entry name" value="Aldolase class I"/>
    <property type="match status" value="1"/>
</dbReference>
<dbReference type="InterPro" id="IPR013785">
    <property type="entry name" value="Aldolase_TIM"/>
</dbReference>
<dbReference type="InterPro" id="IPR050246">
    <property type="entry name" value="Class_II_FBP_aldolase"/>
</dbReference>
<dbReference type="InterPro" id="IPR000771">
    <property type="entry name" value="FBA_II"/>
</dbReference>
<dbReference type="InterPro" id="IPR011289">
    <property type="entry name" value="Fruc_bis_ald_class-2"/>
</dbReference>
<dbReference type="NCBIfam" id="TIGR00167">
    <property type="entry name" value="cbbA"/>
    <property type="match status" value="1"/>
</dbReference>
<dbReference type="NCBIfam" id="TIGR01859">
    <property type="entry name" value="fruc_bis_ald"/>
    <property type="match status" value="1"/>
</dbReference>
<dbReference type="NCBIfam" id="NF005823">
    <property type="entry name" value="PRK07709.1"/>
    <property type="match status" value="1"/>
</dbReference>
<dbReference type="NCBIfam" id="NF006376">
    <property type="entry name" value="PRK08610.1"/>
    <property type="match status" value="1"/>
</dbReference>
<dbReference type="PANTHER" id="PTHR30304">
    <property type="entry name" value="D-TAGATOSE-1,6-BISPHOSPHATE ALDOLASE"/>
    <property type="match status" value="1"/>
</dbReference>
<dbReference type="PANTHER" id="PTHR30304:SF0">
    <property type="entry name" value="D-TAGATOSE-1,6-BISPHOSPHATE ALDOLASE SUBUNIT GATY-RELATED"/>
    <property type="match status" value="1"/>
</dbReference>
<dbReference type="Pfam" id="PF01116">
    <property type="entry name" value="F_bP_aldolase"/>
    <property type="match status" value="1"/>
</dbReference>
<dbReference type="PIRSF" id="PIRSF001359">
    <property type="entry name" value="F_bP_aldolase_II"/>
    <property type="match status" value="1"/>
</dbReference>
<dbReference type="SUPFAM" id="SSF51569">
    <property type="entry name" value="Aldolase"/>
    <property type="match status" value="1"/>
</dbReference>
<dbReference type="PROSITE" id="PS00602">
    <property type="entry name" value="ALDOLASE_CLASS_II_1"/>
    <property type="match status" value="1"/>
</dbReference>
<dbReference type="PROSITE" id="PS00806">
    <property type="entry name" value="ALDOLASE_CLASS_II_2"/>
    <property type="match status" value="1"/>
</dbReference>
<name>ALF_GEOSE</name>
<gene>
    <name type="primary">fba</name>
</gene>
<evidence type="ECO:0000250" key="1"/>
<evidence type="ECO:0000305" key="2"/>
<organism>
    <name type="scientific">Geobacillus stearothermophilus</name>
    <name type="common">Bacillus stearothermophilus</name>
    <dbReference type="NCBI Taxonomy" id="1422"/>
    <lineage>
        <taxon>Bacteria</taxon>
        <taxon>Bacillati</taxon>
        <taxon>Bacillota</taxon>
        <taxon>Bacilli</taxon>
        <taxon>Bacillales</taxon>
        <taxon>Anoxybacillaceae</taxon>
        <taxon>Geobacillus</taxon>
    </lineage>
</organism>
<protein>
    <recommendedName>
        <fullName>Fructose-bisphosphate aldolase</fullName>
        <shortName>FBP aldolase</shortName>
        <shortName>FBPA</shortName>
        <ecNumber>4.1.2.13</ecNumber>
    </recommendedName>
    <alternativeName>
        <fullName>Fructose-1,6-bisphosphate aldolase</fullName>
    </alternativeName>
</protein>